<comment type="function">
    <text evidence="1">Nucleoside diphosphate sugar hydrolase that hydrolyzes GDP-mannose as its preferred substrate, yielding GMP and mannose-1-phosphate.</text>
</comment>
<comment type="catalytic activity">
    <reaction evidence="1">
        <text>GDP-alpha-D-mannose + H2O = alpha-D-mannose 1-phosphate + GMP + 2 H(+)</text>
        <dbReference type="Rhea" id="RHEA:27978"/>
        <dbReference type="ChEBI" id="CHEBI:15377"/>
        <dbReference type="ChEBI" id="CHEBI:15378"/>
        <dbReference type="ChEBI" id="CHEBI:57527"/>
        <dbReference type="ChEBI" id="CHEBI:58115"/>
        <dbReference type="ChEBI" id="CHEBI:58409"/>
    </reaction>
</comment>
<comment type="cofactor">
    <cofactor evidence="1">
        <name>Mg(2+)</name>
        <dbReference type="ChEBI" id="CHEBI:18420"/>
    </cofactor>
</comment>
<comment type="subunit">
    <text evidence="1">Homodimer.</text>
</comment>
<comment type="domain">
    <text evidence="1">In the dimer, the N-terminal domains are swapped between the two monomers, such that residues of both chains contribute to the active site.</text>
</comment>
<comment type="similarity">
    <text evidence="3">Belongs to the Nudix hydrolase family. NudK subfamily.</text>
</comment>
<protein>
    <recommendedName>
        <fullName>GDP-mannose pyrophosphatase</fullName>
        <ecNumber evidence="1">3.6.1.-</ecNumber>
    </recommendedName>
    <alternativeName>
        <fullName>GDP-mannose hydrolase</fullName>
    </alternativeName>
    <alternativeName>
        <fullName>GDPMK</fullName>
    </alternativeName>
</protein>
<name>NUDK_SALPB</name>
<feature type="chain" id="PRO_0000342496" description="GDP-mannose pyrophosphatase">
    <location>
        <begin position="1"/>
        <end position="191"/>
    </location>
</feature>
<feature type="domain" description="Nudix hydrolase" evidence="2">
    <location>
        <begin position="43"/>
        <end position="180"/>
    </location>
</feature>
<feature type="short sequence motif" description="Nudix box">
    <location>
        <begin position="86"/>
        <end position="106"/>
    </location>
</feature>
<feature type="binding site" description="in other chain" evidence="1">
    <location>
        <position position="17"/>
    </location>
    <ligand>
        <name>GDP-alpha-D-mannose</name>
        <dbReference type="ChEBI" id="CHEBI:57527"/>
        <note>ligand shared between dimeric partners</note>
    </ligand>
</feature>
<feature type="binding site" evidence="1">
    <location>
        <begin position="38"/>
        <end position="40"/>
    </location>
    <ligand>
        <name>GDP-alpha-D-mannose</name>
        <dbReference type="ChEBI" id="CHEBI:57527"/>
        <note>ligand shared between dimeric partners</note>
    </ligand>
</feature>
<feature type="binding site" description="in other chain" evidence="1">
    <location>
        <position position="67"/>
    </location>
    <ligand>
        <name>GDP-alpha-D-mannose</name>
        <dbReference type="ChEBI" id="CHEBI:57527"/>
        <note>ligand shared between dimeric partners</note>
    </ligand>
</feature>
<feature type="binding site" description="in other chain" evidence="1">
    <location>
        <begin position="85"/>
        <end position="87"/>
    </location>
    <ligand>
        <name>GDP-alpha-D-mannose</name>
        <dbReference type="ChEBI" id="CHEBI:57527"/>
        <note>ligand shared between dimeric partners</note>
    </ligand>
</feature>
<feature type="binding site" evidence="1">
    <location>
        <position position="85"/>
    </location>
    <ligand>
        <name>Mg(2+)</name>
        <dbReference type="ChEBI" id="CHEBI:18420"/>
        <label>1</label>
    </ligand>
</feature>
<feature type="binding site" evidence="1">
    <location>
        <position position="100"/>
    </location>
    <ligand>
        <name>Mg(2+)</name>
        <dbReference type="ChEBI" id="CHEBI:18420"/>
        <label>2</label>
    </ligand>
</feature>
<feature type="binding site" description="in other chain" evidence="1">
    <location>
        <position position="104"/>
    </location>
    <ligand>
        <name>GDP-alpha-D-mannose</name>
        <dbReference type="ChEBI" id="CHEBI:57527"/>
        <note>ligand shared between dimeric partners</note>
    </ligand>
</feature>
<feature type="binding site" evidence="1">
    <location>
        <position position="104"/>
    </location>
    <ligand>
        <name>Mg(2+)</name>
        <dbReference type="ChEBI" id="CHEBI:18420"/>
        <label>1</label>
    </ligand>
</feature>
<feature type="binding site" evidence="1">
    <location>
        <position position="104"/>
    </location>
    <ligand>
        <name>Mg(2+)</name>
        <dbReference type="ChEBI" id="CHEBI:18420"/>
        <label>2</label>
    </ligand>
</feature>
<feature type="binding site" description="in other chain" evidence="1">
    <location>
        <position position="127"/>
    </location>
    <ligand>
        <name>GDP-alpha-D-mannose</name>
        <dbReference type="ChEBI" id="CHEBI:57527"/>
        <note>ligand shared between dimeric partners</note>
    </ligand>
</feature>
<feature type="binding site" description="in other chain" evidence="1">
    <location>
        <begin position="150"/>
        <end position="151"/>
    </location>
    <ligand>
        <name>GDP-alpha-D-mannose</name>
        <dbReference type="ChEBI" id="CHEBI:57527"/>
        <note>ligand shared between dimeric partners</note>
    </ligand>
</feature>
<feature type="binding site" evidence="1">
    <location>
        <position position="151"/>
    </location>
    <ligand>
        <name>Mg(2+)</name>
        <dbReference type="ChEBI" id="CHEBI:18420"/>
        <label>2</label>
    </ligand>
</feature>
<feature type="binding site" description="in other chain" evidence="1">
    <location>
        <position position="176"/>
    </location>
    <ligand>
        <name>GDP-alpha-D-mannose</name>
        <dbReference type="ChEBI" id="CHEBI:57527"/>
        <note>ligand shared between dimeric partners</note>
    </ligand>
</feature>
<accession>A9N308</accession>
<evidence type="ECO:0000250" key="1">
    <source>
        <dbReference type="UniProtKB" id="P37128"/>
    </source>
</evidence>
<evidence type="ECO:0000255" key="2">
    <source>
        <dbReference type="PROSITE-ProRule" id="PRU00794"/>
    </source>
</evidence>
<evidence type="ECO:0000305" key="3"/>
<reference key="1">
    <citation type="submission" date="2007-11" db="EMBL/GenBank/DDBJ databases">
        <authorList>
            <consortium name="The Salmonella enterica serovar Paratyphi B Genome Sequencing Project"/>
            <person name="McClelland M."/>
            <person name="Sanderson E.K."/>
            <person name="Porwollik S."/>
            <person name="Spieth J."/>
            <person name="Clifton W.S."/>
            <person name="Fulton R."/>
            <person name="Cordes M."/>
            <person name="Wollam A."/>
            <person name="Shah N."/>
            <person name="Pepin K."/>
            <person name="Bhonagiri V."/>
            <person name="Nash W."/>
            <person name="Johnson M."/>
            <person name="Thiruvilangam P."/>
            <person name="Wilson R."/>
        </authorList>
    </citation>
    <scope>NUCLEOTIDE SEQUENCE [LARGE SCALE GENOMIC DNA]</scope>
    <source>
        <strain>ATCC BAA-1250 / SPB7</strain>
    </source>
</reference>
<dbReference type="EC" id="3.6.1.-" evidence="1"/>
<dbReference type="EMBL" id="CP000886">
    <property type="protein sequence ID" value="ABX65908.1"/>
    <property type="molecule type" value="Genomic_DNA"/>
</dbReference>
<dbReference type="RefSeq" id="WP_000084033.1">
    <property type="nucleotide sequence ID" value="NC_010102.1"/>
</dbReference>
<dbReference type="SMR" id="A9N308"/>
<dbReference type="KEGG" id="spq:SPAB_00475"/>
<dbReference type="PATRIC" id="fig|1016998.12.peg.449"/>
<dbReference type="HOGENOM" id="CLU_062658_6_0_6"/>
<dbReference type="BioCyc" id="SENT1016998:SPAB_RS01930-MONOMER"/>
<dbReference type="Proteomes" id="UP000008556">
    <property type="component" value="Chromosome"/>
</dbReference>
<dbReference type="GO" id="GO:0005829">
    <property type="term" value="C:cytosol"/>
    <property type="evidence" value="ECO:0007669"/>
    <property type="project" value="TreeGrafter"/>
</dbReference>
<dbReference type="GO" id="GO:0016818">
    <property type="term" value="F:hydrolase activity, acting on acid anhydrides, in phosphorus-containing anhydrides"/>
    <property type="evidence" value="ECO:0007669"/>
    <property type="project" value="InterPro"/>
</dbReference>
<dbReference type="GO" id="GO:0046872">
    <property type="term" value="F:metal ion binding"/>
    <property type="evidence" value="ECO:0007669"/>
    <property type="project" value="UniProtKB-KW"/>
</dbReference>
<dbReference type="GO" id="GO:0006753">
    <property type="term" value="P:nucleoside phosphate metabolic process"/>
    <property type="evidence" value="ECO:0007669"/>
    <property type="project" value="TreeGrafter"/>
</dbReference>
<dbReference type="GO" id="GO:0019693">
    <property type="term" value="P:ribose phosphate metabolic process"/>
    <property type="evidence" value="ECO:0007669"/>
    <property type="project" value="TreeGrafter"/>
</dbReference>
<dbReference type="CDD" id="cd24157">
    <property type="entry name" value="NUDIX_GDPMK"/>
    <property type="match status" value="1"/>
</dbReference>
<dbReference type="FunFam" id="3.90.79.10:FF:000010">
    <property type="entry name" value="GDP-mannose pyrophosphatase NudK"/>
    <property type="match status" value="1"/>
</dbReference>
<dbReference type="Gene3D" id="3.90.79.10">
    <property type="entry name" value="Nucleoside Triphosphate Pyrophosphohydrolase"/>
    <property type="match status" value="1"/>
</dbReference>
<dbReference type="InterPro" id="IPR004385">
    <property type="entry name" value="NDP_pyrophosphatase"/>
</dbReference>
<dbReference type="InterPro" id="IPR015797">
    <property type="entry name" value="NUDIX_hydrolase-like_dom_sf"/>
</dbReference>
<dbReference type="InterPro" id="IPR000086">
    <property type="entry name" value="NUDIX_hydrolase_dom"/>
</dbReference>
<dbReference type="NCBIfam" id="TIGR00052">
    <property type="entry name" value="nudix-type nucleoside diphosphatase, YffH/AdpP family"/>
    <property type="match status" value="1"/>
</dbReference>
<dbReference type="NCBIfam" id="NF011585">
    <property type="entry name" value="PRK15009.1"/>
    <property type="match status" value="1"/>
</dbReference>
<dbReference type="PANTHER" id="PTHR11839:SF18">
    <property type="entry name" value="NUDIX HYDROLASE DOMAIN-CONTAINING PROTEIN"/>
    <property type="match status" value="1"/>
</dbReference>
<dbReference type="PANTHER" id="PTHR11839">
    <property type="entry name" value="UDP/ADP-SUGAR PYROPHOSPHATASE"/>
    <property type="match status" value="1"/>
</dbReference>
<dbReference type="Pfam" id="PF00293">
    <property type="entry name" value="NUDIX"/>
    <property type="match status" value="1"/>
</dbReference>
<dbReference type="SUPFAM" id="SSF55811">
    <property type="entry name" value="Nudix"/>
    <property type="match status" value="1"/>
</dbReference>
<dbReference type="PROSITE" id="PS51462">
    <property type="entry name" value="NUDIX"/>
    <property type="match status" value="1"/>
</dbReference>
<organism>
    <name type="scientific">Salmonella paratyphi B (strain ATCC BAA-1250 / SPB7)</name>
    <dbReference type="NCBI Taxonomy" id="1016998"/>
    <lineage>
        <taxon>Bacteria</taxon>
        <taxon>Pseudomonadati</taxon>
        <taxon>Pseudomonadota</taxon>
        <taxon>Gammaproteobacteria</taxon>
        <taxon>Enterobacterales</taxon>
        <taxon>Enterobacteriaceae</taxon>
        <taxon>Salmonella</taxon>
    </lineage>
</organism>
<keyword id="KW-0378">Hydrolase</keyword>
<keyword id="KW-0460">Magnesium</keyword>
<keyword id="KW-0479">Metal-binding</keyword>
<sequence>MSQTITLIKDKILSDNYFTLRNITYDLTRRNGEVIRHKREVYDRGNGATILLYNSTKKTVLLVRQFRVATWVNGNQDGMLIETCAGLLDNDEPEVCIRKEAIEETGYDVGEVRKIFELYMSPGGVTELIHFFIAEYHDSERASIGGGVEDEEIEVLELPFSRALEMVRSGEIRDGKTVLLLNYLQTSHLMD</sequence>
<gene>
    <name type="primary">nudK</name>
    <name type="ordered locus">SPAB_00475</name>
</gene>
<proteinExistence type="inferred from homology"/>